<keyword id="KW-1003">Cell membrane</keyword>
<keyword id="KW-0472">Membrane</keyword>
<keyword id="KW-0812">Transmembrane</keyword>
<keyword id="KW-1133">Transmembrane helix</keyword>
<protein>
    <recommendedName>
        <fullName evidence="1">UPF0344 protein Lm4b_02292</fullName>
    </recommendedName>
</protein>
<gene>
    <name type="ordered locus">Lm4b_02292</name>
</gene>
<sequence length="120" mass="13724">MWGYIHLISWVAIVVLTVTALLIYSKSTKSFTMLQMINRVFYILVILSGIMMVKYSIEQSWILAIFKILMGIIVIGVVEMLLSYRKQQKPTGMFLMIFVIVVVITISLGFYLSGGYPLFN</sequence>
<organism>
    <name type="scientific">Listeria monocytogenes serotype 4b (strain CLIP80459)</name>
    <dbReference type="NCBI Taxonomy" id="568819"/>
    <lineage>
        <taxon>Bacteria</taxon>
        <taxon>Bacillati</taxon>
        <taxon>Bacillota</taxon>
        <taxon>Bacilli</taxon>
        <taxon>Bacillales</taxon>
        <taxon>Listeriaceae</taxon>
        <taxon>Listeria</taxon>
    </lineage>
</organism>
<proteinExistence type="inferred from homology"/>
<feature type="chain" id="PRO_1000215410" description="UPF0344 protein Lm4b_02292">
    <location>
        <begin position="1"/>
        <end position="120"/>
    </location>
</feature>
<feature type="transmembrane region" description="Helical" evidence="1">
    <location>
        <begin position="3"/>
        <end position="23"/>
    </location>
</feature>
<feature type="transmembrane region" description="Helical" evidence="1">
    <location>
        <begin position="33"/>
        <end position="53"/>
    </location>
</feature>
<feature type="transmembrane region" description="Helical" evidence="1">
    <location>
        <begin position="62"/>
        <end position="82"/>
    </location>
</feature>
<feature type="transmembrane region" description="Helical" evidence="1">
    <location>
        <begin position="92"/>
        <end position="112"/>
    </location>
</feature>
<name>Y2292_LISMC</name>
<comment type="subcellular location">
    <subcellularLocation>
        <location evidence="1">Cell membrane</location>
        <topology evidence="1">Multi-pass membrane protein</topology>
    </subcellularLocation>
</comment>
<comment type="similarity">
    <text evidence="1">Belongs to the UPF0344 family.</text>
</comment>
<evidence type="ECO:0000255" key="1">
    <source>
        <dbReference type="HAMAP-Rule" id="MF_01536"/>
    </source>
</evidence>
<reference key="1">
    <citation type="journal article" date="2012" name="BMC Genomics">
        <title>Comparative genomics and transcriptomics of lineages I, II, and III strains of Listeria monocytogenes.</title>
        <authorList>
            <person name="Hain T."/>
            <person name="Ghai R."/>
            <person name="Billion A."/>
            <person name="Kuenne C.T."/>
            <person name="Steinweg C."/>
            <person name="Izar B."/>
            <person name="Mohamed W."/>
            <person name="Mraheil M."/>
            <person name="Domann E."/>
            <person name="Schaffrath S."/>
            <person name="Karst U."/>
            <person name="Goesmann A."/>
            <person name="Oehm S."/>
            <person name="Puhler A."/>
            <person name="Merkl R."/>
            <person name="Vorwerk S."/>
            <person name="Glaser P."/>
            <person name="Garrido P."/>
            <person name="Rusniok C."/>
            <person name="Buchrieser C."/>
            <person name="Goebel W."/>
            <person name="Chakraborty T."/>
        </authorList>
    </citation>
    <scope>NUCLEOTIDE SEQUENCE [LARGE SCALE GENOMIC DNA]</scope>
    <source>
        <strain>CLIP80459</strain>
    </source>
</reference>
<accession>C1KXM0</accession>
<dbReference type="EMBL" id="FM242711">
    <property type="protein sequence ID" value="CAS06049.1"/>
    <property type="molecule type" value="Genomic_DNA"/>
</dbReference>
<dbReference type="RefSeq" id="WP_003726823.1">
    <property type="nucleotide sequence ID" value="NC_012488.1"/>
</dbReference>
<dbReference type="KEGG" id="lmc:Lm4b_02292"/>
<dbReference type="HOGENOM" id="CLU_146641_0_0_9"/>
<dbReference type="GO" id="GO:0005886">
    <property type="term" value="C:plasma membrane"/>
    <property type="evidence" value="ECO:0007669"/>
    <property type="project" value="UniProtKB-SubCell"/>
</dbReference>
<dbReference type="HAMAP" id="MF_01536">
    <property type="entry name" value="UPF0344"/>
    <property type="match status" value="1"/>
</dbReference>
<dbReference type="InterPro" id="IPR010899">
    <property type="entry name" value="UPF0344"/>
</dbReference>
<dbReference type="NCBIfam" id="NF010197">
    <property type="entry name" value="PRK13673.1-4"/>
    <property type="match status" value="1"/>
</dbReference>
<dbReference type="Pfam" id="PF07457">
    <property type="entry name" value="DUF1516"/>
    <property type="match status" value="1"/>
</dbReference>